<dbReference type="EC" id="2.7.7.6" evidence="1"/>
<dbReference type="EMBL" id="CP000263">
    <property type="protein sequence ID" value="ABJ90504.1"/>
    <property type="molecule type" value="Genomic_DNA"/>
</dbReference>
<dbReference type="RefSeq" id="WP_011672423.1">
    <property type="nucleotide sequence ID" value="NC_008513.1"/>
</dbReference>
<dbReference type="SMR" id="Q058E5"/>
<dbReference type="STRING" id="372461.BCc_019"/>
<dbReference type="KEGG" id="bcc:BCc_019"/>
<dbReference type="eggNOG" id="COG0085">
    <property type="taxonomic scope" value="Bacteria"/>
</dbReference>
<dbReference type="HOGENOM" id="CLU_000524_4_3_6"/>
<dbReference type="OrthoDB" id="9803954at2"/>
<dbReference type="Proteomes" id="UP000000669">
    <property type="component" value="Chromosome"/>
</dbReference>
<dbReference type="GO" id="GO:0000428">
    <property type="term" value="C:DNA-directed RNA polymerase complex"/>
    <property type="evidence" value="ECO:0007669"/>
    <property type="project" value="UniProtKB-KW"/>
</dbReference>
<dbReference type="GO" id="GO:0003677">
    <property type="term" value="F:DNA binding"/>
    <property type="evidence" value="ECO:0007669"/>
    <property type="project" value="UniProtKB-UniRule"/>
</dbReference>
<dbReference type="GO" id="GO:0003899">
    <property type="term" value="F:DNA-directed RNA polymerase activity"/>
    <property type="evidence" value="ECO:0007669"/>
    <property type="project" value="UniProtKB-UniRule"/>
</dbReference>
<dbReference type="GO" id="GO:0032549">
    <property type="term" value="F:ribonucleoside binding"/>
    <property type="evidence" value="ECO:0007669"/>
    <property type="project" value="InterPro"/>
</dbReference>
<dbReference type="GO" id="GO:0006351">
    <property type="term" value="P:DNA-templated transcription"/>
    <property type="evidence" value="ECO:0007669"/>
    <property type="project" value="UniProtKB-UniRule"/>
</dbReference>
<dbReference type="CDD" id="cd00653">
    <property type="entry name" value="RNA_pol_B_RPB2"/>
    <property type="match status" value="1"/>
</dbReference>
<dbReference type="FunFam" id="2.40.270.10:FF:000004">
    <property type="entry name" value="DNA-directed RNA polymerase subunit beta"/>
    <property type="match status" value="1"/>
</dbReference>
<dbReference type="FunFam" id="2.40.50.100:FF:000006">
    <property type="entry name" value="DNA-directed RNA polymerase subunit beta"/>
    <property type="match status" value="1"/>
</dbReference>
<dbReference type="FunFam" id="3.90.1800.10:FF:000001">
    <property type="entry name" value="DNA-directed RNA polymerase subunit beta"/>
    <property type="match status" value="1"/>
</dbReference>
<dbReference type="Gene3D" id="2.40.50.100">
    <property type="match status" value="1"/>
</dbReference>
<dbReference type="Gene3D" id="2.40.50.150">
    <property type="match status" value="1"/>
</dbReference>
<dbReference type="Gene3D" id="3.90.1100.10">
    <property type="match status" value="2"/>
</dbReference>
<dbReference type="Gene3D" id="2.30.150.10">
    <property type="entry name" value="DNA-directed RNA polymerase, beta subunit, external 1 domain"/>
    <property type="match status" value="1"/>
</dbReference>
<dbReference type="Gene3D" id="2.40.270.10">
    <property type="entry name" value="DNA-directed RNA polymerase, subunit 2, domain 6"/>
    <property type="match status" value="1"/>
</dbReference>
<dbReference type="Gene3D" id="3.90.1800.10">
    <property type="entry name" value="RNA polymerase alpha subunit dimerisation domain"/>
    <property type="match status" value="1"/>
</dbReference>
<dbReference type="HAMAP" id="MF_01321">
    <property type="entry name" value="RNApol_bact_RpoB"/>
    <property type="match status" value="1"/>
</dbReference>
<dbReference type="InterPro" id="IPR042107">
    <property type="entry name" value="DNA-dir_RNA_pol_bsu_ext_1_sf"/>
</dbReference>
<dbReference type="InterPro" id="IPR019462">
    <property type="entry name" value="DNA-dir_RNA_pol_bsu_external_1"/>
</dbReference>
<dbReference type="InterPro" id="IPR015712">
    <property type="entry name" value="DNA-dir_RNA_pol_su2"/>
</dbReference>
<dbReference type="InterPro" id="IPR007120">
    <property type="entry name" value="DNA-dir_RNAP_su2_dom"/>
</dbReference>
<dbReference type="InterPro" id="IPR037033">
    <property type="entry name" value="DNA-dir_RNAP_su2_hyb_sf"/>
</dbReference>
<dbReference type="InterPro" id="IPR010243">
    <property type="entry name" value="RNA_pol_bsu_bac"/>
</dbReference>
<dbReference type="InterPro" id="IPR007121">
    <property type="entry name" value="RNA_pol_bsu_CS"/>
</dbReference>
<dbReference type="InterPro" id="IPR007644">
    <property type="entry name" value="RNA_pol_bsu_protrusion"/>
</dbReference>
<dbReference type="InterPro" id="IPR007642">
    <property type="entry name" value="RNA_pol_Rpb2_2"/>
</dbReference>
<dbReference type="InterPro" id="IPR007645">
    <property type="entry name" value="RNA_pol_Rpb2_3"/>
</dbReference>
<dbReference type="InterPro" id="IPR007641">
    <property type="entry name" value="RNA_pol_Rpb2_7"/>
</dbReference>
<dbReference type="InterPro" id="IPR014724">
    <property type="entry name" value="RNA_pol_RPB2_OB-fold"/>
</dbReference>
<dbReference type="NCBIfam" id="NF001616">
    <property type="entry name" value="PRK00405.1"/>
    <property type="match status" value="1"/>
</dbReference>
<dbReference type="NCBIfam" id="TIGR02013">
    <property type="entry name" value="rpoB"/>
    <property type="match status" value="1"/>
</dbReference>
<dbReference type="PANTHER" id="PTHR20856">
    <property type="entry name" value="DNA-DIRECTED RNA POLYMERASE I SUBUNIT 2"/>
    <property type="match status" value="1"/>
</dbReference>
<dbReference type="Pfam" id="PF04563">
    <property type="entry name" value="RNA_pol_Rpb2_1"/>
    <property type="match status" value="1"/>
</dbReference>
<dbReference type="Pfam" id="PF04561">
    <property type="entry name" value="RNA_pol_Rpb2_2"/>
    <property type="match status" value="2"/>
</dbReference>
<dbReference type="Pfam" id="PF04565">
    <property type="entry name" value="RNA_pol_Rpb2_3"/>
    <property type="match status" value="1"/>
</dbReference>
<dbReference type="Pfam" id="PF10385">
    <property type="entry name" value="RNA_pol_Rpb2_45"/>
    <property type="match status" value="1"/>
</dbReference>
<dbReference type="Pfam" id="PF00562">
    <property type="entry name" value="RNA_pol_Rpb2_6"/>
    <property type="match status" value="1"/>
</dbReference>
<dbReference type="Pfam" id="PF04560">
    <property type="entry name" value="RNA_pol_Rpb2_7"/>
    <property type="match status" value="1"/>
</dbReference>
<dbReference type="SUPFAM" id="SSF64484">
    <property type="entry name" value="beta and beta-prime subunits of DNA dependent RNA-polymerase"/>
    <property type="match status" value="1"/>
</dbReference>
<dbReference type="PROSITE" id="PS01166">
    <property type="entry name" value="RNA_POL_BETA"/>
    <property type="match status" value="1"/>
</dbReference>
<keyword id="KW-0240">DNA-directed RNA polymerase</keyword>
<keyword id="KW-0548">Nucleotidyltransferase</keyword>
<keyword id="KW-1185">Reference proteome</keyword>
<keyword id="KW-0804">Transcription</keyword>
<keyword id="KW-0808">Transferase</keyword>
<sequence length="1343" mass="153250">MIYSYTEKKRIRENFGKQPKILDIPYLLSIQIDSFKKFIEPKKNNYQGLESAFQSIFPIRSYNGCAELQYVSYTLGKKLFDMYESKTRGTTYSVPLRVKLQLIIYEKDSKNTNVKHIKEQEVYMGELPLMTHNGTFIINGTERVVVSQLHRSPGVFFDSDKGKTHSSGKILYNARIIPYRGSWLDVEFDPKDHLFIRIDRRRKIPATVLLHALNFSTEKILKIFFKHDIFYIKNKNIYMYLIPKRLKGEIIPFEIIKNKKRYIKKGERITTEHIKKLKKKKIKTIQIPEEYLYGKTISKNYYHPKTKEILIKSNTTLTQDEFNKIKNFNNKKFYVLFTNNIDNGAYISETLKIDTTKDRLTALIEIYKIMRPGEPPTKEAAENLFNNLFFSQERYDLSPVGRMKFNKSLKRKEKKGSGILNKEDIIDVIKKLINIKNGKGEIDDIDHLSNRRVRSVGEMVENQFRIGLVRVERAVRERLSLSDLDTLMPQDIINAKPISSAIKEFFGSSQLSQFMDQNNPLAEITHKRRISALGIGGLTRERAGFEVRDVHPTHYGRVCPVETPEGPNIGLINSLSIYARTNQYGFLETPYRKVKNGTVTTKIKYLSAIEEGNYIIAQANTKINKFGKFYKKFVTCRYNGEFGLFKNKKVNYMDISTQQIVSVGASLIPFLEHDDANRALMGANMQRQAVPTIKSEKPLVGTGMERSVAIDSGVTIIAKRSGKIEYVDASRIVVRIKDEKIRTYESGIDIYNLTKYSRSNQNTCINQIPCINLNDSIKKGDVLADGPSTDLGELALGQNMRVAFMPWNGYNFEDSILISEKVEREDKFTTIHIQELSCICRDTKLGIEEITSDIPNIGESALSKLDTSGIIYIGADVSSGDVLVGKVTPKGETQLTPEEKLLRAIFGEKASDVKDSSLRVPNGTNGTVIDVQIFTRDGVKKDKRTIEIEEMLLKKAKKDLTEELKIFELNIINRINKILLTLKTKINCIVANSLNEYFKKKIKYPKKIKKKIHTLKIQYKQLQKKFKKKIKEKTKKIIQGDELAPGILKIVKIFLAVKRKIQPGDKMAGRHGNKGVVSKINPVEDMPYDNNGEPIDIVLNPLGVPSRMNLGQILETHLGLAAKGIGNIINRMLKTNKKIYKIRKFLQKVYNLGENINQKINLDNFSDIEILQLAKNLRIGLPIATPVFDGVNEKEIKKLLKMSNFSTSGQITLFDGRTGEKFERNVTVGYMYMLKLNHLVDDKMHARSTGSYSLITQQPLGGKAQFGGQRFGEMEVWALEAYGASHTLQEMLTVKSDDVTGRTKMYKNIVSGKHNMEPGMPESFNVLVKEIRSLGINIELNNN</sequence>
<proteinExistence type="inferred from homology"/>
<accession>Q058E5</accession>
<organism>
    <name type="scientific">Buchnera aphidicola subsp. Cinara cedri (strain Cc)</name>
    <dbReference type="NCBI Taxonomy" id="372461"/>
    <lineage>
        <taxon>Bacteria</taxon>
        <taxon>Pseudomonadati</taxon>
        <taxon>Pseudomonadota</taxon>
        <taxon>Gammaproteobacteria</taxon>
        <taxon>Enterobacterales</taxon>
        <taxon>Erwiniaceae</taxon>
        <taxon>Buchnera</taxon>
    </lineage>
</organism>
<gene>
    <name evidence="1" type="primary">rpoB</name>
    <name type="ordered locus">BCc_019</name>
</gene>
<feature type="chain" id="PRO_0000300288" description="DNA-directed RNA polymerase subunit beta">
    <location>
        <begin position="1"/>
        <end position="1343"/>
    </location>
</feature>
<protein>
    <recommendedName>
        <fullName evidence="1">DNA-directed RNA polymerase subunit beta</fullName>
        <shortName evidence="1">RNAP subunit beta</shortName>
        <ecNumber evidence="1">2.7.7.6</ecNumber>
    </recommendedName>
    <alternativeName>
        <fullName evidence="1">RNA polymerase subunit beta</fullName>
    </alternativeName>
    <alternativeName>
        <fullName evidence="1">Transcriptase subunit beta</fullName>
    </alternativeName>
</protein>
<comment type="function">
    <text evidence="1">DNA-dependent RNA polymerase catalyzes the transcription of DNA into RNA using the four ribonucleoside triphosphates as substrates.</text>
</comment>
<comment type="catalytic activity">
    <reaction evidence="1">
        <text>RNA(n) + a ribonucleoside 5'-triphosphate = RNA(n+1) + diphosphate</text>
        <dbReference type="Rhea" id="RHEA:21248"/>
        <dbReference type="Rhea" id="RHEA-COMP:14527"/>
        <dbReference type="Rhea" id="RHEA-COMP:17342"/>
        <dbReference type="ChEBI" id="CHEBI:33019"/>
        <dbReference type="ChEBI" id="CHEBI:61557"/>
        <dbReference type="ChEBI" id="CHEBI:140395"/>
        <dbReference type="EC" id="2.7.7.6"/>
    </reaction>
</comment>
<comment type="subunit">
    <text evidence="1">The RNAP catalytic core consists of 2 alpha, 1 beta, 1 beta' and 1 omega subunit. When a sigma factor is associated with the core the holoenzyme is formed, which can initiate transcription.</text>
</comment>
<comment type="similarity">
    <text evidence="1">Belongs to the RNA polymerase beta chain family.</text>
</comment>
<evidence type="ECO:0000255" key="1">
    <source>
        <dbReference type="HAMAP-Rule" id="MF_01321"/>
    </source>
</evidence>
<reference key="1">
    <citation type="journal article" date="2006" name="Science">
        <title>A small microbial genome: the end of a long symbiotic relationship?</title>
        <authorList>
            <person name="Perez-Brocal V."/>
            <person name="Gil R."/>
            <person name="Ramos S."/>
            <person name="Lamelas A."/>
            <person name="Postigo M."/>
            <person name="Michelena J.M."/>
            <person name="Silva F.J."/>
            <person name="Moya A."/>
            <person name="Latorre A."/>
        </authorList>
    </citation>
    <scope>NUCLEOTIDE SEQUENCE [LARGE SCALE GENOMIC DNA]</scope>
    <source>
        <strain>Cc</strain>
    </source>
</reference>
<name>RPOB_BUCCC</name>